<feature type="chain" id="PRO_1000073728" description="Aspartate carbamoyltransferase catalytic subunit">
    <location>
        <begin position="1"/>
        <end position="316"/>
    </location>
</feature>
<feature type="binding site" evidence="1">
    <location>
        <position position="58"/>
    </location>
    <ligand>
        <name>carbamoyl phosphate</name>
        <dbReference type="ChEBI" id="CHEBI:58228"/>
    </ligand>
</feature>
<feature type="binding site" evidence="1">
    <location>
        <position position="59"/>
    </location>
    <ligand>
        <name>carbamoyl phosphate</name>
        <dbReference type="ChEBI" id="CHEBI:58228"/>
    </ligand>
</feature>
<feature type="binding site" evidence="1">
    <location>
        <position position="86"/>
    </location>
    <ligand>
        <name>L-aspartate</name>
        <dbReference type="ChEBI" id="CHEBI:29991"/>
    </ligand>
</feature>
<feature type="binding site" evidence="1">
    <location>
        <position position="108"/>
    </location>
    <ligand>
        <name>carbamoyl phosphate</name>
        <dbReference type="ChEBI" id="CHEBI:58228"/>
    </ligand>
</feature>
<feature type="binding site" evidence="1">
    <location>
        <position position="136"/>
    </location>
    <ligand>
        <name>carbamoyl phosphate</name>
        <dbReference type="ChEBI" id="CHEBI:58228"/>
    </ligand>
</feature>
<feature type="binding site" evidence="1">
    <location>
        <position position="139"/>
    </location>
    <ligand>
        <name>carbamoyl phosphate</name>
        <dbReference type="ChEBI" id="CHEBI:58228"/>
    </ligand>
</feature>
<feature type="binding site" evidence="1">
    <location>
        <position position="169"/>
    </location>
    <ligand>
        <name>L-aspartate</name>
        <dbReference type="ChEBI" id="CHEBI:29991"/>
    </ligand>
</feature>
<feature type="binding site" evidence="1">
    <location>
        <position position="223"/>
    </location>
    <ligand>
        <name>L-aspartate</name>
        <dbReference type="ChEBI" id="CHEBI:29991"/>
    </ligand>
</feature>
<feature type="binding site" evidence="1">
    <location>
        <position position="264"/>
    </location>
    <ligand>
        <name>carbamoyl phosphate</name>
        <dbReference type="ChEBI" id="CHEBI:58228"/>
    </ligand>
</feature>
<feature type="binding site" evidence="1">
    <location>
        <position position="265"/>
    </location>
    <ligand>
        <name>carbamoyl phosphate</name>
        <dbReference type="ChEBI" id="CHEBI:58228"/>
    </ligand>
</feature>
<sequence length="316" mass="34957">MTLRARHLLGIEHLAPDEIVTLLDLADRYADLNRRPDKHGDALDGLTQINMFFENSTRTQASFEIAGKRLGADVMNMEVRASSIKKGETLIDTAMTLNAMHPDLLVVRHPHSGAVNLLAEKVNCAVLNAGDGRHEHPTQALLDALTIRRAKGKLHRLNVAICGDIAHSRVARSNILLLGKMENRIRLVGPRTLMPAEIAELGVEVYEDMKAGLDGVDVVMMLRLQKERMDGGFIPSEREYYHRYGLDAEKLAYAKPDAIVMHPGPMNRGVEIDGTLADDINRSVIQEQVEMGVAVRMAAMDLLARNLRAAREGVRA</sequence>
<proteinExistence type="inferred from homology"/>
<name>PYRB_DINSH</name>
<gene>
    <name evidence="1" type="primary">pyrB</name>
    <name type="ordered locus">Dshi_3091</name>
</gene>
<protein>
    <recommendedName>
        <fullName evidence="1">Aspartate carbamoyltransferase catalytic subunit</fullName>
        <ecNumber evidence="1">2.1.3.2</ecNumber>
    </recommendedName>
    <alternativeName>
        <fullName evidence="1">Aspartate transcarbamylase</fullName>
        <shortName evidence="1">ATCase</shortName>
    </alternativeName>
</protein>
<evidence type="ECO:0000255" key="1">
    <source>
        <dbReference type="HAMAP-Rule" id="MF_00001"/>
    </source>
</evidence>
<keyword id="KW-0665">Pyrimidine biosynthesis</keyword>
<keyword id="KW-1185">Reference proteome</keyword>
<keyword id="KW-0808">Transferase</keyword>
<comment type="function">
    <text evidence="1">Catalyzes the condensation of carbamoyl phosphate and aspartate to form carbamoyl aspartate and inorganic phosphate, the committed step in the de novo pyrimidine nucleotide biosynthesis pathway.</text>
</comment>
<comment type="catalytic activity">
    <reaction evidence="1">
        <text>carbamoyl phosphate + L-aspartate = N-carbamoyl-L-aspartate + phosphate + H(+)</text>
        <dbReference type="Rhea" id="RHEA:20013"/>
        <dbReference type="ChEBI" id="CHEBI:15378"/>
        <dbReference type="ChEBI" id="CHEBI:29991"/>
        <dbReference type="ChEBI" id="CHEBI:32814"/>
        <dbReference type="ChEBI" id="CHEBI:43474"/>
        <dbReference type="ChEBI" id="CHEBI:58228"/>
        <dbReference type="EC" id="2.1.3.2"/>
    </reaction>
</comment>
<comment type="pathway">
    <text evidence="1">Pyrimidine metabolism; UMP biosynthesis via de novo pathway; (S)-dihydroorotate from bicarbonate: step 2/3.</text>
</comment>
<comment type="subunit">
    <text evidence="1">Heterododecamer (2C3:3R2) of six catalytic PyrB chains organized as two trimers (C3), and six regulatory PyrI chains organized as three dimers (R2).</text>
</comment>
<comment type="similarity">
    <text evidence="1">Belongs to the aspartate/ornithine carbamoyltransferase superfamily. ATCase family.</text>
</comment>
<dbReference type="EC" id="2.1.3.2" evidence="1"/>
<dbReference type="EMBL" id="CP000830">
    <property type="protein sequence ID" value="ABV94824.1"/>
    <property type="molecule type" value="Genomic_DNA"/>
</dbReference>
<dbReference type="RefSeq" id="WP_012179752.1">
    <property type="nucleotide sequence ID" value="NC_009952.1"/>
</dbReference>
<dbReference type="SMR" id="A8LL75"/>
<dbReference type="STRING" id="398580.Dshi_3091"/>
<dbReference type="KEGG" id="dsh:Dshi_3091"/>
<dbReference type="eggNOG" id="COG0540">
    <property type="taxonomic scope" value="Bacteria"/>
</dbReference>
<dbReference type="HOGENOM" id="CLU_043846_2_0_5"/>
<dbReference type="OrthoDB" id="9774690at2"/>
<dbReference type="UniPathway" id="UPA00070">
    <property type="reaction ID" value="UER00116"/>
</dbReference>
<dbReference type="Proteomes" id="UP000006833">
    <property type="component" value="Chromosome"/>
</dbReference>
<dbReference type="GO" id="GO:0005829">
    <property type="term" value="C:cytosol"/>
    <property type="evidence" value="ECO:0007669"/>
    <property type="project" value="TreeGrafter"/>
</dbReference>
<dbReference type="GO" id="GO:0016597">
    <property type="term" value="F:amino acid binding"/>
    <property type="evidence" value="ECO:0007669"/>
    <property type="project" value="InterPro"/>
</dbReference>
<dbReference type="GO" id="GO:0004070">
    <property type="term" value="F:aspartate carbamoyltransferase activity"/>
    <property type="evidence" value="ECO:0007669"/>
    <property type="project" value="UniProtKB-UniRule"/>
</dbReference>
<dbReference type="GO" id="GO:0006207">
    <property type="term" value="P:'de novo' pyrimidine nucleobase biosynthetic process"/>
    <property type="evidence" value="ECO:0007669"/>
    <property type="project" value="InterPro"/>
</dbReference>
<dbReference type="GO" id="GO:0044205">
    <property type="term" value="P:'de novo' UMP biosynthetic process"/>
    <property type="evidence" value="ECO:0007669"/>
    <property type="project" value="UniProtKB-UniRule"/>
</dbReference>
<dbReference type="GO" id="GO:0006520">
    <property type="term" value="P:amino acid metabolic process"/>
    <property type="evidence" value="ECO:0007669"/>
    <property type="project" value="InterPro"/>
</dbReference>
<dbReference type="FunFam" id="3.40.50.1370:FF:000007">
    <property type="entry name" value="Aspartate carbamoyltransferase"/>
    <property type="match status" value="1"/>
</dbReference>
<dbReference type="Gene3D" id="3.40.50.1370">
    <property type="entry name" value="Aspartate/ornithine carbamoyltransferase"/>
    <property type="match status" value="2"/>
</dbReference>
<dbReference type="HAMAP" id="MF_00001">
    <property type="entry name" value="Asp_carb_tr"/>
    <property type="match status" value="1"/>
</dbReference>
<dbReference type="InterPro" id="IPR006132">
    <property type="entry name" value="Asp/Orn_carbamoyltranf_P-bd"/>
</dbReference>
<dbReference type="InterPro" id="IPR006130">
    <property type="entry name" value="Asp/Orn_carbamoylTrfase"/>
</dbReference>
<dbReference type="InterPro" id="IPR036901">
    <property type="entry name" value="Asp/Orn_carbamoylTrfase_sf"/>
</dbReference>
<dbReference type="InterPro" id="IPR002082">
    <property type="entry name" value="Asp_carbamoyltransf"/>
</dbReference>
<dbReference type="InterPro" id="IPR006131">
    <property type="entry name" value="Asp_carbamoyltransf_Asp/Orn-bd"/>
</dbReference>
<dbReference type="NCBIfam" id="TIGR00670">
    <property type="entry name" value="asp_carb_tr"/>
    <property type="match status" value="1"/>
</dbReference>
<dbReference type="NCBIfam" id="NF002032">
    <property type="entry name" value="PRK00856.1"/>
    <property type="match status" value="1"/>
</dbReference>
<dbReference type="PANTHER" id="PTHR45753:SF6">
    <property type="entry name" value="ASPARTATE CARBAMOYLTRANSFERASE"/>
    <property type="match status" value="1"/>
</dbReference>
<dbReference type="PANTHER" id="PTHR45753">
    <property type="entry name" value="ORNITHINE CARBAMOYLTRANSFERASE, MITOCHONDRIAL"/>
    <property type="match status" value="1"/>
</dbReference>
<dbReference type="Pfam" id="PF00185">
    <property type="entry name" value="OTCace"/>
    <property type="match status" value="1"/>
</dbReference>
<dbReference type="Pfam" id="PF02729">
    <property type="entry name" value="OTCace_N"/>
    <property type="match status" value="1"/>
</dbReference>
<dbReference type="PRINTS" id="PR00100">
    <property type="entry name" value="AOTCASE"/>
</dbReference>
<dbReference type="PRINTS" id="PR00101">
    <property type="entry name" value="ATCASE"/>
</dbReference>
<dbReference type="SUPFAM" id="SSF53671">
    <property type="entry name" value="Aspartate/ornithine carbamoyltransferase"/>
    <property type="match status" value="1"/>
</dbReference>
<dbReference type="PROSITE" id="PS00097">
    <property type="entry name" value="CARBAMOYLTRANSFERASE"/>
    <property type="match status" value="1"/>
</dbReference>
<organism>
    <name type="scientific">Dinoroseobacter shibae (strain DSM 16493 / NCIMB 14021 / DFL 12)</name>
    <dbReference type="NCBI Taxonomy" id="398580"/>
    <lineage>
        <taxon>Bacteria</taxon>
        <taxon>Pseudomonadati</taxon>
        <taxon>Pseudomonadota</taxon>
        <taxon>Alphaproteobacteria</taxon>
        <taxon>Rhodobacterales</taxon>
        <taxon>Roseobacteraceae</taxon>
        <taxon>Dinoroseobacter</taxon>
    </lineage>
</organism>
<accession>A8LL75</accession>
<reference key="1">
    <citation type="journal article" date="2010" name="ISME J.">
        <title>The complete genome sequence of the algal symbiont Dinoroseobacter shibae: a hitchhiker's guide to life in the sea.</title>
        <authorList>
            <person name="Wagner-Dobler I."/>
            <person name="Ballhausen B."/>
            <person name="Berger M."/>
            <person name="Brinkhoff T."/>
            <person name="Buchholz I."/>
            <person name="Bunk B."/>
            <person name="Cypionka H."/>
            <person name="Daniel R."/>
            <person name="Drepper T."/>
            <person name="Gerdts G."/>
            <person name="Hahnke S."/>
            <person name="Han C."/>
            <person name="Jahn D."/>
            <person name="Kalhoefer D."/>
            <person name="Kiss H."/>
            <person name="Klenk H.P."/>
            <person name="Kyrpides N."/>
            <person name="Liebl W."/>
            <person name="Liesegang H."/>
            <person name="Meincke L."/>
            <person name="Pati A."/>
            <person name="Petersen J."/>
            <person name="Piekarski T."/>
            <person name="Pommerenke C."/>
            <person name="Pradella S."/>
            <person name="Pukall R."/>
            <person name="Rabus R."/>
            <person name="Stackebrandt E."/>
            <person name="Thole S."/>
            <person name="Thompson L."/>
            <person name="Tielen P."/>
            <person name="Tomasch J."/>
            <person name="von Jan M."/>
            <person name="Wanphrut N."/>
            <person name="Wichels A."/>
            <person name="Zech H."/>
            <person name="Simon M."/>
        </authorList>
    </citation>
    <scope>NUCLEOTIDE SEQUENCE [LARGE SCALE GENOMIC DNA]</scope>
    <source>
        <strain>DSM 16493 / NCIMB 14021 / DFL 12</strain>
    </source>
</reference>